<gene>
    <name type="primary">HIS3</name>
    <name type="ordered locus">CNH01620</name>
</gene>
<feature type="chain" id="PRO_0000158236" description="Imidazoleglycerol-phosphate dehydratase">
    <location>
        <begin position="1"/>
        <end position="202"/>
    </location>
</feature>
<feature type="strand" evidence="3">
    <location>
        <begin position="5"/>
        <end position="11"/>
    </location>
</feature>
<feature type="strand" evidence="3">
    <location>
        <begin position="16"/>
        <end position="23"/>
    </location>
</feature>
<feature type="turn" evidence="3">
    <location>
        <begin position="27"/>
        <end position="29"/>
    </location>
</feature>
<feature type="strand" evidence="3">
    <location>
        <begin position="34"/>
        <end position="37"/>
    </location>
</feature>
<feature type="helix" evidence="3">
    <location>
        <begin position="41"/>
        <end position="53"/>
    </location>
</feature>
<feature type="strand" evidence="3">
    <location>
        <begin position="57"/>
        <end position="64"/>
    </location>
</feature>
<feature type="helix" evidence="3">
    <location>
        <begin position="75"/>
        <end position="89"/>
    </location>
</feature>
<feature type="strand" evidence="3">
    <location>
        <begin position="98"/>
        <end position="105"/>
    </location>
</feature>
<feature type="strand" evidence="3">
    <location>
        <begin position="108"/>
        <end position="115"/>
    </location>
</feature>
<feature type="strand" evidence="3">
    <location>
        <begin position="121"/>
        <end position="125"/>
    </location>
</feature>
<feature type="strand" evidence="3">
    <location>
        <begin position="130"/>
        <end position="133"/>
    </location>
</feature>
<feature type="helix" evidence="3">
    <location>
        <begin position="139"/>
        <end position="152"/>
    </location>
</feature>
<feature type="strand" evidence="3">
    <location>
        <begin position="155"/>
        <end position="162"/>
    </location>
</feature>
<feature type="helix" evidence="3">
    <location>
        <begin position="166"/>
        <end position="185"/>
    </location>
</feature>
<dbReference type="EC" id="4.2.1.19"/>
<dbReference type="EMBL" id="U04329">
    <property type="protein sequence ID" value="AAA50951.1"/>
    <property type="molecule type" value="Genomic_DNA"/>
</dbReference>
<dbReference type="EMBL" id="AE017348">
    <property type="protein sequence ID" value="AAW45034.1"/>
    <property type="molecule type" value="Genomic_DNA"/>
</dbReference>
<dbReference type="RefSeq" id="XP_572341.1">
    <property type="nucleotide sequence ID" value="XM_572341.1"/>
</dbReference>
<dbReference type="PDB" id="1RHY">
    <property type="method" value="X-ray"/>
    <property type="resolution" value="2.30 A"/>
    <property type="chains" value="A/B=1-202"/>
</dbReference>
<dbReference type="PDBsum" id="1RHY"/>
<dbReference type="SMR" id="P0CO22"/>
<dbReference type="FunCoup" id="P0CO22">
    <property type="interactions" value="96"/>
</dbReference>
<dbReference type="STRING" id="214684.P0CO22"/>
<dbReference type="PaxDb" id="214684-P0CO22"/>
<dbReference type="EnsemblFungi" id="AAW45034">
    <property type="protein sequence ID" value="AAW45034"/>
    <property type="gene ID" value="CNH01620"/>
</dbReference>
<dbReference type="GeneID" id="3259352"/>
<dbReference type="KEGG" id="cne:CNH01620"/>
<dbReference type="VEuPathDB" id="FungiDB:CNH01620"/>
<dbReference type="eggNOG" id="KOG3143">
    <property type="taxonomic scope" value="Eukaryota"/>
</dbReference>
<dbReference type="HOGENOM" id="CLU_044308_3_0_1"/>
<dbReference type="InParanoid" id="P0CO22"/>
<dbReference type="OMA" id="GIPFFDH"/>
<dbReference type="OrthoDB" id="447729at2759"/>
<dbReference type="BRENDA" id="4.2.1.19">
    <property type="organism ID" value="1723"/>
</dbReference>
<dbReference type="UniPathway" id="UPA00031">
    <property type="reaction ID" value="UER00011"/>
</dbReference>
<dbReference type="EvolutionaryTrace" id="P0CO22"/>
<dbReference type="Proteomes" id="UP000002149">
    <property type="component" value="Chromosome 8"/>
</dbReference>
<dbReference type="GO" id="GO:0004424">
    <property type="term" value="F:imidazoleglycerol-phosphate dehydratase activity"/>
    <property type="evidence" value="ECO:0000318"/>
    <property type="project" value="GO_Central"/>
</dbReference>
<dbReference type="GO" id="GO:0000105">
    <property type="term" value="P:L-histidine biosynthetic process"/>
    <property type="evidence" value="ECO:0000318"/>
    <property type="project" value="GO_Central"/>
</dbReference>
<dbReference type="CDD" id="cd07914">
    <property type="entry name" value="IGPD"/>
    <property type="match status" value="1"/>
</dbReference>
<dbReference type="FunFam" id="3.30.230.40:FF:000004">
    <property type="entry name" value="Imidazoleglycerol-phosphate dehydratase"/>
    <property type="match status" value="1"/>
</dbReference>
<dbReference type="FunFam" id="3.30.230.40:FF:000001">
    <property type="entry name" value="Imidazoleglycerol-phosphate dehydratase HisB"/>
    <property type="match status" value="1"/>
</dbReference>
<dbReference type="Gene3D" id="3.30.230.40">
    <property type="entry name" value="Imidazole glycerol phosphate dehydratase, domain 1"/>
    <property type="match status" value="2"/>
</dbReference>
<dbReference type="HAMAP" id="MF_00076">
    <property type="entry name" value="HisB"/>
    <property type="match status" value="1"/>
</dbReference>
<dbReference type="InterPro" id="IPR038494">
    <property type="entry name" value="IGPD_sf"/>
</dbReference>
<dbReference type="InterPro" id="IPR000807">
    <property type="entry name" value="ImidazoleglycerolP_deHydtase"/>
</dbReference>
<dbReference type="InterPro" id="IPR020565">
    <property type="entry name" value="ImidazoleglycerP_deHydtase_CS"/>
</dbReference>
<dbReference type="InterPro" id="IPR020568">
    <property type="entry name" value="Ribosomal_Su5_D2-typ_SF"/>
</dbReference>
<dbReference type="NCBIfam" id="NF002111">
    <property type="entry name" value="PRK00951.2-1"/>
    <property type="match status" value="1"/>
</dbReference>
<dbReference type="NCBIfam" id="NF002114">
    <property type="entry name" value="PRK00951.2-4"/>
    <property type="match status" value="1"/>
</dbReference>
<dbReference type="PANTHER" id="PTHR23133:SF2">
    <property type="entry name" value="IMIDAZOLEGLYCEROL-PHOSPHATE DEHYDRATASE"/>
    <property type="match status" value="1"/>
</dbReference>
<dbReference type="PANTHER" id="PTHR23133">
    <property type="entry name" value="IMIDAZOLEGLYCEROL-PHOSPHATE DEHYDRATASE HIS7"/>
    <property type="match status" value="1"/>
</dbReference>
<dbReference type="Pfam" id="PF00475">
    <property type="entry name" value="IGPD"/>
    <property type="match status" value="1"/>
</dbReference>
<dbReference type="SUPFAM" id="SSF54211">
    <property type="entry name" value="Ribosomal protein S5 domain 2-like"/>
    <property type="match status" value="2"/>
</dbReference>
<dbReference type="PROSITE" id="PS00954">
    <property type="entry name" value="IGP_DEHYDRATASE_1"/>
    <property type="match status" value="1"/>
</dbReference>
<dbReference type="PROSITE" id="PS00955">
    <property type="entry name" value="IGP_DEHYDRATASE_2"/>
    <property type="match status" value="1"/>
</dbReference>
<comment type="function">
    <text evidence="1">Imidazole glycerol-phosphate dehydratase required for histidine biosynthesis.</text>
</comment>
<comment type="catalytic activity">
    <reaction evidence="1">
        <text>D-erythro-1-(imidazol-4-yl)glycerol 3-phosphate = 3-(imidazol-4-yl)-2-oxopropyl phosphate + H2O</text>
        <dbReference type="Rhea" id="RHEA:11040"/>
        <dbReference type="ChEBI" id="CHEBI:15377"/>
        <dbReference type="ChEBI" id="CHEBI:57766"/>
        <dbReference type="ChEBI" id="CHEBI:58278"/>
        <dbReference type="EC" id="4.2.1.19"/>
    </reaction>
</comment>
<comment type="pathway">
    <text>Amino-acid biosynthesis; L-histidine biosynthesis; L-histidine from 5-phospho-alpha-D-ribose 1-diphosphate: step 6/9.</text>
</comment>
<comment type="subunit">
    <text>Homotrimer.</text>
</comment>
<comment type="similarity">
    <text evidence="2">Belongs to the imidazoleglycerol-phosphate dehydratase family.</text>
</comment>
<keyword id="KW-0002">3D-structure</keyword>
<keyword id="KW-0028">Amino-acid biosynthesis</keyword>
<keyword id="KW-0903">Direct protein sequencing</keyword>
<keyword id="KW-0368">Histidine biosynthesis</keyword>
<keyword id="KW-0456">Lyase</keyword>
<keyword id="KW-1185">Reference proteome</keyword>
<name>HIS7_CRYNJ</name>
<reference key="1">
    <citation type="journal article" date="1994" name="Gene">
        <title>Cloning, sequence analysis and expression of the gene encoding imidazole glycerol phosphate dehydratase in Cryptococcus neoformans.</title>
        <authorList>
            <person name="Parker A.R."/>
            <person name="Moore T.D."/>
            <person name="Edman J.C."/>
            <person name="Schwab J.M."/>
            <person name="Davisson V.J."/>
        </authorList>
    </citation>
    <scope>NUCLEOTIDE SEQUENCE [GENOMIC DNA]</scope>
    <scope>PROTEIN SEQUENCE OF 2-26</scope>
    <scope>FUNCTION</scope>
    <scope>CATALYTIC ACTIVITY</scope>
</reference>
<reference key="2">
    <citation type="journal article" date="2005" name="Science">
        <title>The genome of the basidiomycetous yeast and human pathogen Cryptococcus neoformans.</title>
        <authorList>
            <person name="Loftus B.J."/>
            <person name="Fung E."/>
            <person name="Roncaglia P."/>
            <person name="Rowley D."/>
            <person name="Amedeo P."/>
            <person name="Bruno D."/>
            <person name="Vamathevan J."/>
            <person name="Miranda M."/>
            <person name="Anderson I.J."/>
            <person name="Fraser J.A."/>
            <person name="Allen J.E."/>
            <person name="Bosdet I.E."/>
            <person name="Brent M.R."/>
            <person name="Chiu R."/>
            <person name="Doering T.L."/>
            <person name="Donlin M.J."/>
            <person name="D'Souza C.A."/>
            <person name="Fox D.S."/>
            <person name="Grinberg V."/>
            <person name="Fu J."/>
            <person name="Fukushima M."/>
            <person name="Haas B.J."/>
            <person name="Huang J.C."/>
            <person name="Janbon G."/>
            <person name="Jones S.J.M."/>
            <person name="Koo H.L."/>
            <person name="Krzywinski M.I."/>
            <person name="Kwon-Chung K.J."/>
            <person name="Lengeler K.B."/>
            <person name="Maiti R."/>
            <person name="Marra M.A."/>
            <person name="Marra R.E."/>
            <person name="Mathewson C.A."/>
            <person name="Mitchell T.G."/>
            <person name="Pertea M."/>
            <person name="Riggs F.R."/>
            <person name="Salzberg S.L."/>
            <person name="Schein J.E."/>
            <person name="Shvartsbeyn A."/>
            <person name="Shin H."/>
            <person name="Shumway M."/>
            <person name="Specht C.A."/>
            <person name="Suh B.B."/>
            <person name="Tenney A."/>
            <person name="Utterback T.R."/>
            <person name="Wickes B.L."/>
            <person name="Wortman J.R."/>
            <person name="Wye N.H."/>
            <person name="Kronstad J.W."/>
            <person name="Lodge J.K."/>
            <person name="Heitman J."/>
            <person name="Davis R.W."/>
            <person name="Fraser C.M."/>
            <person name="Hyman R.W."/>
        </authorList>
    </citation>
    <scope>NUCLEOTIDE SEQUENCE [LARGE SCALE GENOMIC DNA]</scope>
    <source>
        <strain>JEC21 / ATCC MYA-565</strain>
    </source>
</reference>
<reference key="3">
    <citation type="journal article" date="2004" name="J. Biol. Chem.">
        <title>Crystal structure of imidazole glycerol-phosphate dehydratase: duplication of an unusual fold.</title>
        <authorList>
            <person name="Sinha S.C."/>
            <person name="Chaudhuri B.N."/>
            <person name="Burgner J.W."/>
            <person name="Yakovleva G."/>
            <person name="Davisson V.J."/>
            <person name="Smith J.L."/>
        </authorList>
    </citation>
    <scope>X-RAY CRYSTALLOGRAPHY (2.3 ANGSTROMS)</scope>
</reference>
<proteinExistence type="evidence at protein level"/>
<sequence length="202" mass="21976">MSERIASVERTTSETHISCTIDLDHIPGVTEQKINVSTGIGFLDHMFTALAKHGGMSLQLQCKGDLHIDDHHTAEDCALALGEAFKKALGERKGIKRYGYAYAPLDESLSRAVIDISSRPYFMCHLPFTREKVGDLSTEMVSHLLQSFAFAAGVTLHIDSIRGENNHHIAESAFKALALAIRMAISRTGGDDVPSTKGVLAL</sequence>
<organism>
    <name type="scientific">Cryptococcus neoformans var. neoformans serotype D (strain JEC21 / ATCC MYA-565)</name>
    <name type="common">Filobasidiella neoformans</name>
    <dbReference type="NCBI Taxonomy" id="214684"/>
    <lineage>
        <taxon>Eukaryota</taxon>
        <taxon>Fungi</taxon>
        <taxon>Dikarya</taxon>
        <taxon>Basidiomycota</taxon>
        <taxon>Agaricomycotina</taxon>
        <taxon>Tremellomycetes</taxon>
        <taxon>Tremellales</taxon>
        <taxon>Cryptococcaceae</taxon>
        <taxon>Cryptococcus</taxon>
        <taxon>Cryptococcus neoformans species complex</taxon>
    </lineage>
</organism>
<evidence type="ECO:0000269" key="1">
    <source>
    </source>
</evidence>
<evidence type="ECO:0000305" key="2"/>
<evidence type="ECO:0007829" key="3">
    <source>
        <dbReference type="PDB" id="1RHY"/>
    </source>
</evidence>
<accession>P0CO22</accession>
<accession>P40919</accession>
<accession>Q55J26</accession>
<accession>Q5KCM8</accession>
<protein>
    <recommendedName>
        <fullName>Imidazoleglycerol-phosphate dehydratase</fullName>
        <shortName>IGPD</shortName>
        <ecNumber>4.2.1.19</ecNumber>
    </recommendedName>
</protein>